<organism>
    <name type="scientific">Escherichia coli O157:H7 (strain EC4115 / EHEC)</name>
    <dbReference type="NCBI Taxonomy" id="444450"/>
    <lineage>
        <taxon>Bacteria</taxon>
        <taxon>Pseudomonadati</taxon>
        <taxon>Pseudomonadota</taxon>
        <taxon>Gammaproteobacteria</taxon>
        <taxon>Enterobacterales</taxon>
        <taxon>Enterobacteriaceae</taxon>
        <taxon>Escherichia</taxon>
    </lineage>
</organism>
<keyword id="KW-0963">Cytoplasm</keyword>
<keyword id="KW-0378">Hydrolase</keyword>
<keyword id="KW-0479">Metal-binding</keyword>
<keyword id="KW-0533">Nickel</keyword>
<comment type="catalytic activity">
    <reaction evidence="1">
        <text>urea + 2 H2O + H(+) = hydrogencarbonate + 2 NH4(+)</text>
        <dbReference type="Rhea" id="RHEA:20557"/>
        <dbReference type="ChEBI" id="CHEBI:15377"/>
        <dbReference type="ChEBI" id="CHEBI:15378"/>
        <dbReference type="ChEBI" id="CHEBI:16199"/>
        <dbReference type="ChEBI" id="CHEBI:17544"/>
        <dbReference type="ChEBI" id="CHEBI:28938"/>
        <dbReference type="EC" id="3.5.1.5"/>
    </reaction>
</comment>
<comment type="cofactor">
    <cofactor evidence="1">
        <name>Ni cation</name>
        <dbReference type="ChEBI" id="CHEBI:25516"/>
    </cofactor>
    <text evidence="1">Binds 2 nickel ions per subunit.</text>
</comment>
<comment type="pathway">
    <text evidence="1">Nitrogen metabolism; urea degradation; CO(2) and NH(3) from urea (urease route): step 1/1.</text>
</comment>
<comment type="subunit">
    <text evidence="1">Heterotrimer of UreA (gamma), UreB (beta) and UreC (alpha) subunits. Three heterotrimers associate to form the active enzyme.</text>
</comment>
<comment type="subcellular location">
    <subcellularLocation>
        <location evidence="1">Cytoplasm</location>
    </subcellularLocation>
</comment>
<comment type="PTM">
    <text evidence="1">Carboxylation allows a single lysine to coordinate two nickel ions.</text>
</comment>
<comment type="similarity">
    <text evidence="1">Belongs to the metallo-dependent hydrolases superfamily. Urease alpha subunit family.</text>
</comment>
<evidence type="ECO:0000255" key="1">
    <source>
        <dbReference type="HAMAP-Rule" id="MF_01953"/>
    </source>
</evidence>
<sequence length="567" mass="60495">MSNISRQAYADMFGPTTGDKIRLADTELWIEVEDDLTTYGEEVKFGGGKVIRDGMGQGQMLSAGCADLVLTNALIIDYWGIVKADIGVKDGRIFAIGKAGNPDIQPNVTIPIGVSTEIIAAEGRIVTAGGVDTHIHWICPQQAEEALTSGITTMIGGGTGPTAGSNATTCTPGPWYIYQMLQAADSLPVNIGLLGKGNCSNPDALREQVAAGVIGLKIHEDWGATPAVINCALTVADEMDVQVALHSDTLNESGFVEDTLTAIGGRTIHTFHTEGAGGGHAPDIITACAHPNILPSSTNPTLPYTVNTIDEHLDMLMVCHHLDPDIAEDVAFAESRIRQETIAAEDVLHDLGAFSLTSSDSQAMGRVGEVVLRTWQVAHRMKVQRGPLPEESGDNDNVRVKRYIAKYTINPALTHGIAHEVGSIEVGKLADLVLWSPAFFGVKPATIVKGGMIAMAPMGDINGSIPTPQPVHYRPMFAALGSARHRCRVTFLSQAAAANGVAEQLNLHSTTAVVKGCRTVQKADMRHNSLLPDITVDSQTYEVRINGELITSEPADILPMAQRYFLF</sequence>
<dbReference type="EC" id="3.5.1.5" evidence="1"/>
<dbReference type="EMBL" id="CP001164">
    <property type="protein sequence ID" value="ACI35641.1"/>
    <property type="molecule type" value="Genomic_DNA"/>
</dbReference>
<dbReference type="RefSeq" id="WP_000065682.1">
    <property type="nucleotide sequence ID" value="NC_011353.1"/>
</dbReference>
<dbReference type="SMR" id="B5YUX3"/>
<dbReference type="MEROPS" id="M38.982"/>
<dbReference type="KEGG" id="ecf:ECH74115_1323"/>
<dbReference type="HOGENOM" id="CLU_000980_0_0_6"/>
<dbReference type="UniPathway" id="UPA00258">
    <property type="reaction ID" value="UER00370"/>
</dbReference>
<dbReference type="GO" id="GO:0005737">
    <property type="term" value="C:cytoplasm"/>
    <property type="evidence" value="ECO:0007669"/>
    <property type="project" value="UniProtKB-SubCell"/>
</dbReference>
<dbReference type="GO" id="GO:0016151">
    <property type="term" value="F:nickel cation binding"/>
    <property type="evidence" value="ECO:0007669"/>
    <property type="project" value="UniProtKB-UniRule"/>
</dbReference>
<dbReference type="GO" id="GO:0009039">
    <property type="term" value="F:urease activity"/>
    <property type="evidence" value="ECO:0007669"/>
    <property type="project" value="UniProtKB-UniRule"/>
</dbReference>
<dbReference type="GO" id="GO:0043419">
    <property type="term" value="P:urea catabolic process"/>
    <property type="evidence" value="ECO:0007669"/>
    <property type="project" value="UniProtKB-UniRule"/>
</dbReference>
<dbReference type="CDD" id="cd00375">
    <property type="entry name" value="Urease_alpha"/>
    <property type="match status" value="1"/>
</dbReference>
<dbReference type="Gene3D" id="3.20.20.140">
    <property type="entry name" value="Metal-dependent hydrolases"/>
    <property type="match status" value="1"/>
</dbReference>
<dbReference type="Gene3D" id="2.30.40.10">
    <property type="entry name" value="Urease, subunit C, domain 1"/>
    <property type="match status" value="1"/>
</dbReference>
<dbReference type="HAMAP" id="MF_01953">
    <property type="entry name" value="Urease_alpha"/>
    <property type="match status" value="1"/>
</dbReference>
<dbReference type="InterPro" id="IPR006680">
    <property type="entry name" value="Amidohydro-rel"/>
</dbReference>
<dbReference type="InterPro" id="IPR011059">
    <property type="entry name" value="Metal-dep_hydrolase_composite"/>
</dbReference>
<dbReference type="InterPro" id="IPR032466">
    <property type="entry name" value="Metal_Hydrolase"/>
</dbReference>
<dbReference type="InterPro" id="IPR011612">
    <property type="entry name" value="Urease_alpha_N_dom"/>
</dbReference>
<dbReference type="InterPro" id="IPR050112">
    <property type="entry name" value="Urease_alpha_subunit"/>
</dbReference>
<dbReference type="InterPro" id="IPR017950">
    <property type="entry name" value="Urease_AS"/>
</dbReference>
<dbReference type="InterPro" id="IPR005848">
    <property type="entry name" value="Urease_asu"/>
</dbReference>
<dbReference type="InterPro" id="IPR017951">
    <property type="entry name" value="Urease_asu_c"/>
</dbReference>
<dbReference type="InterPro" id="IPR029754">
    <property type="entry name" value="Urease_Ni-bd"/>
</dbReference>
<dbReference type="NCBIfam" id="NF009685">
    <property type="entry name" value="PRK13206.1"/>
    <property type="match status" value="1"/>
</dbReference>
<dbReference type="NCBIfam" id="NF009686">
    <property type="entry name" value="PRK13207.1"/>
    <property type="match status" value="1"/>
</dbReference>
<dbReference type="NCBIfam" id="TIGR01792">
    <property type="entry name" value="urease_alph"/>
    <property type="match status" value="1"/>
</dbReference>
<dbReference type="PANTHER" id="PTHR43440">
    <property type="entry name" value="UREASE"/>
    <property type="match status" value="1"/>
</dbReference>
<dbReference type="PANTHER" id="PTHR43440:SF1">
    <property type="entry name" value="UREASE"/>
    <property type="match status" value="1"/>
</dbReference>
<dbReference type="Pfam" id="PF01979">
    <property type="entry name" value="Amidohydro_1"/>
    <property type="match status" value="1"/>
</dbReference>
<dbReference type="Pfam" id="PF00449">
    <property type="entry name" value="Urease_alpha"/>
    <property type="match status" value="1"/>
</dbReference>
<dbReference type="PRINTS" id="PR01752">
    <property type="entry name" value="UREASE"/>
</dbReference>
<dbReference type="SUPFAM" id="SSF51338">
    <property type="entry name" value="Composite domain of metallo-dependent hydrolases"/>
    <property type="match status" value="2"/>
</dbReference>
<dbReference type="SUPFAM" id="SSF51556">
    <property type="entry name" value="Metallo-dependent hydrolases"/>
    <property type="match status" value="1"/>
</dbReference>
<dbReference type="PROSITE" id="PS01120">
    <property type="entry name" value="UREASE_1"/>
    <property type="match status" value="1"/>
</dbReference>
<dbReference type="PROSITE" id="PS00145">
    <property type="entry name" value="UREASE_2"/>
    <property type="match status" value="1"/>
</dbReference>
<dbReference type="PROSITE" id="PS51368">
    <property type="entry name" value="UREASE_3"/>
    <property type="match status" value="1"/>
</dbReference>
<name>URE1_ECO5E</name>
<feature type="chain" id="PRO_1000188872" description="Urease subunit alpha">
    <location>
        <begin position="1"/>
        <end position="567"/>
    </location>
</feature>
<feature type="domain" description="Urease" evidence="1">
    <location>
        <begin position="129"/>
        <end position="567"/>
    </location>
</feature>
<feature type="active site" description="Proton donor" evidence="1">
    <location>
        <position position="320"/>
    </location>
</feature>
<feature type="binding site" evidence="1">
    <location>
        <position position="134"/>
    </location>
    <ligand>
        <name>Ni(2+)</name>
        <dbReference type="ChEBI" id="CHEBI:49786"/>
        <label>1</label>
    </ligand>
</feature>
<feature type="binding site" evidence="1">
    <location>
        <position position="136"/>
    </location>
    <ligand>
        <name>Ni(2+)</name>
        <dbReference type="ChEBI" id="CHEBI:49786"/>
        <label>1</label>
    </ligand>
</feature>
<feature type="binding site" description="via carbamate group" evidence="1">
    <location>
        <position position="217"/>
    </location>
    <ligand>
        <name>Ni(2+)</name>
        <dbReference type="ChEBI" id="CHEBI:49786"/>
        <label>1</label>
    </ligand>
</feature>
<feature type="binding site" description="via carbamate group" evidence="1">
    <location>
        <position position="217"/>
    </location>
    <ligand>
        <name>Ni(2+)</name>
        <dbReference type="ChEBI" id="CHEBI:49786"/>
        <label>2</label>
    </ligand>
</feature>
<feature type="binding site" evidence="1">
    <location>
        <position position="219"/>
    </location>
    <ligand>
        <name>substrate</name>
    </ligand>
</feature>
<feature type="binding site" evidence="1">
    <location>
        <position position="246"/>
    </location>
    <ligand>
        <name>Ni(2+)</name>
        <dbReference type="ChEBI" id="CHEBI:49786"/>
        <label>2</label>
    </ligand>
</feature>
<feature type="binding site" evidence="1">
    <location>
        <position position="272"/>
    </location>
    <ligand>
        <name>Ni(2+)</name>
        <dbReference type="ChEBI" id="CHEBI:49786"/>
        <label>2</label>
    </ligand>
</feature>
<feature type="binding site" evidence="1">
    <location>
        <position position="360"/>
    </location>
    <ligand>
        <name>Ni(2+)</name>
        <dbReference type="ChEBI" id="CHEBI:49786"/>
        <label>1</label>
    </ligand>
</feature>
<feature type="modified residue" description="N6-carboxylysine" evidence="1">
    <location>
        <position position="217"/>
    </location>
</feature>
<proteinExistence type="inferred from homology"/>
<gene>
    <name evidence="1" type="primary">ureC</name>
    <name type="ordered locus">ECH74115_1323</name>
</gene>
<protein>
    <recommendedName>
        <fullName evidence="1">Urease subunit alpha</fullName>
        <ecNumber evidence="1">3.5.1.5</ecNumber>
    </recommendedName>
    <alternativeName>
        <fullName evidence="1">Urea amidohydrolase subunit alpha</fullName>
    </alternativeName>
</protein>
<reference key="1">
    <citation type="journal article" date="2011" name="Proc. Natl. Acad. Sci. U.S.A.">
        <title>Genomic anatomy of Escherichia coli O157:H7 outbreaks.</title>
        <authorList>
            <person name="Eppinger M."/>
            <person name="Mammel M.K."/>
            <person name="Leclerc J.E."/>
            <person name="Ravel J."/>
            <person name="Cebula T.A."/>
        </authorList>
    </citation>
    <scope>NUCLEOTIDE SEQUENCE [LARGE SCALE GENOMIC DNA]</scope>
    <source>
        <strain>EC4115 / EHEC</strain>
    </source>
</reference>
<accession>B5YUX3</accession>